<keyword id="KW-0067">ATP-binding</keyword>
<keyword id="KW-0963">Cytoplasm</keyword>
<keyword id="KW-0436">Ligase</keyword>
<keyword id="KW-0547">Nucleotide-binding</keyword>
<keyword id="KW-0566">Pantothenate biosynthesis</keyword>
<proteinExistence type="inferred from homology"/>
<name>PANC_BACVZ</name>
<evidence type="ECO:0000255" key="1">
    <source>
        <dbReference type="HAMAP-Rule" id="MF_00158"/>
    </source>
</evidence>
<comment type="function">
    <text evidence="1">Catalyzes the condensation of pantoate with beta-alanine in an ATP-dependent reaction via a pantoyl-adenylate intermediate.</text>
</comment>
<comment type="catalytic activity">
    <reaction evidence="1">
        <text>(R)-pantoate + beta-alanine + ATP = (R)-pantothenate + AMP + diphosphate + H(+)</text>
        <dbReference type="Rhea" id="RHEA:10912"/>
        <dbReference type="ChEBI" id="CHEBI:15378"/>
        <dbReference type="ChEBI" id="CHEBI:15980"/>
        <dbReference type="ChEBI" id="CHEBI:29032"/>
        <dbReference type="ChEBI" id="CHEBI:30616"/>
        <dbReference type="ChEBI" id="CHEBI:33019"/>
        <dbReference type="ChEBI" id="CHEBI:57966"/>
        <dbReference type="ChEBI" id="CHEBI:456215"/>
        <dbReference type="EC" id="6.3.2.1"/>
    </reaction>
</comment>
<comment type="pathway">
    <text evidence="1">Cofactor biosynthesis; (R)-pantothenate biosynthesis; (R)-pantothenate from (R)-pantoate and beta-alanine: step 1/1.</text>
</comment>
<comment type="subunit">
    <text evidence="1">Homodimer.</text>
</comment>
<comment type="subcellular location">
    <subcellularLocation>
        <location evidence="1">Cytoplasm</location>
    </subcellularLocation>
</comment>
<comment type="miscellaneous">
    <text evidence="1">The reaction proceeds by a bi uni uni bi ping pong mechanism.</text>
</comment>
<comment type="similarity">
    <text evidence="1">Belongs to the pantothenate synthetase family.</text>
</comment>
<dbReference type="EC" id="6.3.2.1" evidence="1"/>
<dbReference type="EMBL" id="CP000560">
    <property type="protein sequence ID" value="ABS74419.1"/>
    <property type="molecule type" value="Genomic_DNA"/>
</dbReference>
<dbReference type="RefSeq" id="WP_012117844.1">
    <property type="nucleotide sequence ID" value="NC_009725.2"/>
</dbReference>
<dbReference type="SMR" id="A7Z5Z3"/>
<dbReference type="GeneID" id="93081192"/>
<dbReference type="KEGG" id="bay:RBAM_020570"/>
<dbReference type="HOGENOM" id="CLU_047148_0_0_9"/>
<dbReference type="UniPathway" id="UPA00028">
    <property type="reaction ID" value="UER00005"/>
</dbReference>
<dbReference type="Proteomes" id="UP000001120">
    <property type="component" value="Chromosome"/>
</dbReference>
<dbReference type="GO" id="GO:0005829">
    <property type="term" value="C:cytosol"/>
    <property type="evidence" value="ECO:0007669"/>
    <property type="project" value="TreeGrafter"/>
</dbReference>
<dbReference type="GO" id="GO:0005524">
    <property type="term" value="F:ATP binding"/>
    <property type="evidence" value="ECO:0007669"/>
    <property type="project" value="UniProtKB-KW"/>
</dbReference>
<dbReference type="GO" id="GO:0004592">
    <property type="term" value="F:pantoate-beta-alanine ligase activity"/>
    <property type="evidence" value="ECO:0007669"/>
    <property type="project" value="UniProtKB-UniRule"/>
</dbReference>
<dbReference type="GO" id="GO:0015940">
    <property type="term" value="P:pantothenate biosynthetic process"/>
    <property type="evidence" value="ECO:0007669"/>
    <property type="project" value="UniProtKB-UniRule"/>
</dbReference>
<dbReference type="CDD" id="cd00560">
    <property type="entry name" value="PanC"/>
    <property type="match status" value="1"/>
</dbReference>
<dbReference type="FunFam" id="3.30.1300.10:FF:000001">
    <property type="entry name" value="Pantothenate synthetase"/>
    <property type="match status" value="1"/>
</dbReference>
<dbReference type="FunFam" id="3.40.50.620:FF:000013">
    <property type="entry name" value="Pantothenate synthetase"/>
    <property type="match status" value="1"/>
</dbReference>
<dbReference type="Gene3D" id="3.40.50.620">
    <property type="entry name" value="HUPs"/>
    <property type="match status" value="1"/>
</dbReference>
<dbReference type="Gene3D" id="3.30.1300.10">
    <property type="entry name" value="Pantoate-beta-alanine ligase, C-terminal domain"/>
    <property type="match status" value="1"/>
</dbReference>
<dbReference type="HAMAP" id="MF_00158">
    <property type="entry name" value="PanC"/>
    <property type="match status" value="1"/>
</dbReference>
<dbReference type="InterPro" id="IPR004821">
    <property type="entry name" value="Cyt_trans-like"/>
</dbReference>
<dbReference type="InterPro" id="IPR003721">
    <property type="entry name" value="Pantoate_ligase"/>
</dbReference>
<dbReference type="InterPro" id="IPR042176">
    <property type="entry name" value="Pantoate_ligase_C"/>
</dbReference>
<dbReference type="InterPro" id="IPR014729">
    <property type="entry name" value="Rossmann-like_a/b/a_fold"/>
</dbReference>
<dbReference type="NCBIfam" id="TIGR00125">
    <property type="entry name" value="cyt_tran_rel"/>
    <property type="match status" value="1"/>
</dbReference>
<dbReference type="NCBIfam" id="TIGR00018">
    <property type="entry name" value="panC"/>
    <property type="match status" value="1"/>
</dbReference>
<dbReference type="PANTHER" id="PTHR21299">
    <property type="entry name" value="CYTIDYLATE KINASE/PANTOATE-BETA-ALANINE LIGASE"/>
    <property type="match status" value="1"/>
</dbReference>
<dbReference type="PANTHER" id="PTHR21299:SF1">
    <property type="entry name" value="PANTOATE--BETA-ALANINE LIGASE"/>
    <property type="match status" value="1"/>
</dbReference>
<dbReference type="Pfam" id="PF02569">
    <property type="entry name" value="Pantoate_ligase"/>
    <property type="match status" value="1"/>
</dbReference>
<dbReference type="SUPFAM" id="SSF52374">
    <property type="entry name" value="Nucleotidylyl transferase"/>
    <property type="match status" value="1"/>
</dbReference>
<sequence>MKQLTETQQLKELIAQYRSEGRTIGFVPTMGFLHEGHLTLVEKASKENDIVVMSIFVNPTQFGPGEDYEAYPRDLKRDARLAEQAGADVLFTPSPSDMYKGEQNVAVQVKRRTDVLCGASRVGHFDGVATVLTKFFNLVKPTRAYFGLKDAQQAAVVDGLIEDFFMDIELVAVDTVREEDGLAKSSRNVYLTEQERKEAPMIYKALQQGAELIRDGERNPETVIKTVTDIIENTSGVIDYAELYAYPELTPLKTLNGKVILACAVQFSKARLIDNIIIDIDEWERS</sequence>
<gene>
    <name evidence="1" type="primary">panC</name>
    <name type="ordered locus">RBAM_020570</name>
</gene>
<reference key="1">
    <citation type="journal article" date="2007" name="Nat. Biotechnol.">
        <title>Comparative analysis of the complete genome sequence of the plant growth-promoting bacterium Bacillus amyloliquefaciens FZB42.</title>
        <authorList>
            <person name="Chen X.H."/>
            <person name="Koumoutsi A."/>
            <person name="Scholz R."/>
            <person name="Eisenreich A."/>
            <person name="Schneider K."/>
            <person name="Heinemeyer I."/>
            <person name="Morgenstern B."/>
            <person name="Voss B."/>
            <person name="Hess W.R."/>
            <person name="Reva O."/>
            <person name="Junge H."/>
            <person name="Voigt B."/>
            <person name="Jungblut P.R."/>
            <person name="Vater J."/>
            <person name="Suessmuth R."/>
            <person name="Liesegang H."/>
            <person name="Strittmatter A."/>
            <person name="Gottschalk G."/>
            <person name="Borriss R."/>
        </authorList>
    </citation>
    <scope>NUCLEOTIDE SEQUENCE [LARGE SCALE GENOMIC DNA]</scope>
    <source>
        <strain>DSM 23117 / BGSC 10A6 / LMG 26770 / FZB42</strain>
    </source>
</reference>
<accession>A7Z5Z3</accession>
<organism>
    <name type="scientific">Bacillus velezensis (strain DSM 23117 / BGSC 10A6 / LMG 26770 / FZB42)</name>
    <name type="common">Bacillus amyloliquefaciens subsp. plantarum</name>
    <dbReference type="NCBI Taxonomy" id="326423"/>
    <lineage>
        <taxon>Bacteria</taxon>
        <taxon>Bacillati</taxon>
        <taxon>Bacillota</taxon>
        <taxon>Bacilli</taxon>
        <taxon>Bacillales</taxon>
        <taxon>Bacillaceae</taxon>
        <taxon>Bacillus</taxon>
        <taxon>Bacillus amyloliquefaciens group</taxon>
    </lineage>
</organism>
<protein>
    <recommendedName>
        <fullName evidence="1">Pantothenate synthetase</fullName>
        <shortName evidence="1">PS</shortName>
        <ecNumber evidence="1">6.3.2.1</ecNumber>
    </recommendedName>
    <alternativeName>
        <fullName evidence="1">Pantoate--beta-alanine ligase</fullName>
    </alternativeName>
    <alternativeName>
        <fullName evidence="1">Pantoate-activating enzyme</fullName>
    </alternativeName>
</protein>
<feature type="chain" id="PRO_1000076838" description="Pantothenate synthetase">
    <location>
        <begin position="1"/>
        <end position="286"/>
    </location>
</feature>
<feature type="active site" description="Proton donor" evidence="1">
    <location>
        <position position="37"/>
    </location>
</feature>
<feature type="binding site" evidence="1">
    <location>
        <begin position="30"/>
        <end position="37"/>
    </location>
    <ligand>
        <name>ATP</name>
        <dbReference type="ChEBI" id="CHEBI:30616"/>
    </ligand>
</feature>
<feature type="binding site" evidence="1">
    <location>
        <position position="61"/>
    </location>
    <ligand>
        <name>(R)-pantoate</name>
        <dbReference type="ChEBI" id="CHEBI:15980"/>
    </ligand>
</feature>
<feature type="binding site" evidence="1">
    <location>
        <position position="61"/>
    </location>
    <ligand>
        <name>beta-alanine</name>
        <dbReference type="ChEBI" id="CHEBI:57966"/>
    </ligand>
</feature>
<feature type="binding site" evidence="1">
    <location>
        <begin position="147"/>
        <end position="150"/>
    </location>
    <ligand>
        <name>ATP</name>
        <dbReference type="ChEBI" id="CHEBI:30616"/>
    </ligand>
</feature>
<feature type="binding site" evidence="1">
    <location>
        <position position="153"/>
    </location>
    <ligand>
        <name>(R)-pantoate</name>
        <dbReference type="ChEBI" id="CHEBI:15980"/>
    </ligand>
</feature>
<feature type="binding site" evidence="1">
    <location>
        <position position="176"/>
    </location>
    <ligand>
        <name>ATP</name>
        <dbReference type="ChEBI" id="CHEBI:30616"/>
    </ligand>
</feature>
<feature type="binding site" evidence="1">
    <location>
        <begin position="184"/>
        <end position="187"/>
    </location>
    <ligand>
        <name>ATP</name>
        <dbReference type="ChEBI" id="CHEBI:30616"/>
    </ligand>
</feature>